<sequence>MSRFFANGSDSESESSEEEVQAPNFNKATAFQFSDDEEEVKRVVRSTKEKRYENLTAIIKSIRNHKKIRDISNTLTSFEDLTKAYQKALPVISKEENGITPRFYIRCLAELEDFINEVWEDRDGRKNLSKNNAKSLGTLRQKVRKYIKDFEDDLSRFRENPQEESENEDEEAAAHDSDGGLDAGSDIEKREPTVAATKLAKSVPSKLPVADDEDSDESIDWDPDTESETESSEDENQYQNMRERFLKRSTEKDDKDDDKRKDKRKEQKIKLRKRAEDEDGEGWETVVKGHVVEKPKMFEKDAEIDIPLVLAKLLEIMSARGKKRTDRRLQIDLLFELRDISDQHELGVPISVKIHFNIISAIFDYNQKISEPMKLEHWALLLEVMQSMMKLLLANPDIQLSESVAEEHEEYNATPYLIRGCPLAAVERLDDEFTKLLKECDPHSNDYVSRLKDEINVVKTIELVLQYFEVNGSNNERCRIYLRKVEHLYYKFDPEVFKKKRGDIPNTTQTSVDIMDRLCKFIYAKDDTDRIRTRAILTHIYHHAMHDNWFQARDLILMSHLQDNIDAADPSTRILYNRMMANLGLCAFRQENVKDAHHCLVDLMVTGKAKELLAQGLLPQRQHERSAEQEKIEKQRQMPFHMHINLELLECVYLVSAMLLEIPYIAAHEFDARRRMISKTFYQQLRSSERQSLVGPPESMREHVVAAAKAMRCGNWQACANFIVNKKMNTKVWDLFYESDRVRDMLVKFIKEESLRTYLFTYSNVYTSISIPSLAEMYELPVQKVHSIISKMIINEELMASLDDPSETVVMHRSEPSRLQALAMQFVDKVTNLVDVNEKVFDMKQGNFFQRGNMGNRGDRGYNRNQNNQGGNWGGQRRDNRNQRNRNQRGHHKNQQNQNQQQQQQHQREQQQVQTIDEE</sequence>
<reference key="1">
    <citation type="journal article" date="2007" name="Nature">
        <title>Evolution of genes and genomes on the Drosophila phylogeny.</title>
        <authorList>
            <consortium name="Drosophila 12 genomes consortium"/>
        </authorList>
    </citation>
    <scope>NUCLEOTIDE SEQUENCE [LARGE SCALE GENOMIC DNA]</scope>
    <source>
        <strain>Tucson 14030-0811.24</strain>
    </source>
</reference>
<gene>
    <name evidence="1" type="primary">eIF3c</name>
    <name evidence="1" type="synonym">eIF3-S8</name>
    <name type="ORF">GK15661</name>
</gene>
<feature type="chain" id="PRO_0000365394" description="Eukaryotic translation initiation factor 3 subunit C">
    <location>
        <begin position="1"/>
        <end position="919"/>
    </location>
</feature>
<feature type="domain" description="PCI" evidence="2">
    <location>
        <begin position="640"/>
        <end position="816"/>
    </location>
</feature>
<feature type="region of interest" description="Disordered" evidence="3">
    <location>
        <begin position="1"/>
        <end position="28"/>
    </location>
</feature>
<feature type="region of interest" description="Disordered" evidence="3">
    <location>
        <begin position="154"/>
        <end position="275"/>
    </location>
</feature>
<feature type="region of interest" description="Disordered" evidence="3">
    <location>
        <begin position="848"/>
        <end position="919"/>
    </location>
</feature>
<feature type="compositionally biased region" description="Acidic residues" evidence="3">
    <location>
        <begin position="11"/>
        <end position="20"/>
    </location>
</feature>
<feature type="compositionally biased region" description="Acidic residues" evidence="3">
    <location>
        <begin position="162"/>
        <end position="171"/>
    </location>
</feature>
<feature type="compositionally biased region" description="Acidic residues" evidence="3">
    <location>
        <begin position="210"/>
        <end position="236"/>
    </location>
</feature>
<feature type="compositionally biased region" description="Basic and acidic residues" evidence="3">
    <location>
        <begin position="241"/>
        <end position="269"/>
    </location>
</feature>
<feature type="compositionally biased region" description="Basic residues" evidence="3">
    <location>
        <begin position="883"/>
        <end position="894"/>
    </location>
</feature>
<feature type="compositionally biased region" description="Low complexity" evidence="3">
    <location>
        <begin position="895"/>
        <end position="919"/>
    </location>
</feature>
<feature type="modified residue" description="Phosphoserine" evidence="1">
    <location>
        <position position="34"/>
    </location>
</feature>
<feature type="modified residue" description="Phosphoserine" evidence="1">
    <location>
        <position position="165"/>
    </location>
</feature>
<feature type="modified residue" description="Phosphoserine" evidence="1">
    <location>
        <position position="177"/>
    </location>
</feature>
<evidence type="ECO:0000255" key="1">
    <source>
        <dbReference type="HAMAP-Rule" id="MF_03002"/>
    </source>
</evidence>
<evidence type="ECO:0000255" key="2">
    <source>
        <dbReference type="PROSITE-ProRule" id="PRU01185"/>
    </source>
</evidence>
<evidence type="ECO:0000256" key="3">
    <source>
        <dbReference type="SAM" id="MobiDB-lite"/>
    </source>
</evidence>
<accession>B4MRZ8</accession>
<proteinExistence type="inferred from homology"/>
<dbReference type="EMBL" id="CH963850">
    <property type="protein sequence ID" value="EDW74887.1"/>
    <property type="molecule type" value="Genomic_DNA"/>
</dbReference>
<dbReference type="RefSeq" id="XP_002063901.1">
    <property type="nucleotide sequence ID" value="XM_002063865.2"/>
</dbReference>
<dbReference type="SMR" id="B4MRZ8"/>
<dbReference type="STRING" id="7260.B4MRZ8"/>
<dbReference type="EnsemblMetazoa" id="FBtr0246312">
    <property type="protein sequence ID" value="FBpp0244804"/>
    <property type="gene ID" value="FBgn0217666"/>
</dbReference>
<dbReference type="EnsemblMetazoa" id="XM_023174953.2">
    <property type="protein sequence ID" value="XP_023030721.1"/>
    <property type="gene ID" value="LOC6640989"/>
</dbReference>
<dbReference type="eggNOG" id="KOG1076">
    <property type="taxonomic scope" value="Eukaryota"/>
</dbReference>
<dbReference type="HOGENOM" id="CLU_004304_0_0_1"/>
<dbReference type="OMA" id="FRCGLIK"/>
<dbReference type="OrthoDB" id="29647at2759"/>
<dbReference type="PhylomeDB" id="B4MRZ8"/>
<dbReference type="ChiTaRS" id="eIF3-S8">
    <property type="organism name" value="fly"/>
</dbReference>
<dbReference type="Proteomes" id="UP000007798">
    <property type="component" value="Unassembled WGS sequence"/>
</dbReference>
<dbReference type="GO" id="GO:0016282">
    <property type="term" value="C:eukaryotic 43S preinitiation complex"/>
    <property type="evidence" value="ECO:0007669"/>
    <property type="project" value="UniProtKB-UniRule"/>
</dbReference>
<dbReference type="GO" id="GO:0033290">
    <property type="term" value="C:eukaryotic 48S preinitiation complex"/>
    <property type="evidence" value="ECO:0007669"/>
    <property type="project" value="UniProtKB-UniRule"/>
</dbReference>
<dbReference type="GO" id="GO:0005852">
    <property type="term" value="C:eukaryotic translation initiation factor 3 complex"/>
    <property type="evidence" value="ECO:0007669"/>
    <property type="project" value="UniProtKB-UniRule"/>
</dbReference>
<dbReference type="GO" id="GO:0003723">
    <property type="term" value="F:RNA binding"/>
    <property type="evidence" value="ECO:0007669"/>
    <property type="project" value="InterPro"/>
</dbReference>
<dbReference type="GO" id="GO:0003743">
    <property type="term" value="F:translation initiation factor activity"/>
    <property type="evidence" value="ECO:0007669"/>
    <property type="project" value="UniProtKB-UniRule"/>
</dbReference>
<dbReference type="GO" id="GO:0031369">
    <property type="term" value="F:translation initiation factor binding"/>
    <property type="evidence" value="ECO:0007669"/>
    <property type="project" value="InterPro"/>
</dbReference>
<dbReference type="GO" id="GO:0001732">
    <property type="term" value="P:formation of cytoplasmic translation initiation complex"/>
    <property type="evidence" value="ECO:0007669"/>
    <property type="project" value="UniProtKB-UniRule"/>
</dbReference>
<dbReference type="FunFam" id="1.10.10.10:FF:000300">
    <property type="entry name" value="Eukaryotic translation initiation factor 3 subunit C"/>
    <property type="match status" value="1"/>
</dbReference>
<dbReference type="Gene3D" id="1.25.40.570">
    <property type="match status" value="1"/>
</dbReference>
<dbReference type="HAMAP" id="MF_03002">
    <property type="entry name" value="eIF3c"/>
    <property type="match status" value="1"/>
</dbReference>
<dbReference type="InterPro" id="IPR027516">
    <property type="entry name" value="EIF3C"/>
</dbReference>
<dbReference type="InterPro" id="IPR008905">
    <property type="entry name" value="EIF3C_N_dom"/>
</dbReference>
<dbReference type="InterPro" id="IPR000717">
    <property type="entry name" value="PCI_dom"/>
</dbReference>
<dbReference type="InterPro" id="IPR036390">
    <property type="entry name" value="WH_DNA-bd_sf"/>
</dbReference>
<dbReference type="PANTHER" id="PTHR13937">
    <property type="entry name" value="EUKARYOTIC TRANSLATION INITATION FACTOR 3, SUBUNIT 8 EIF3S8 -RELATED"/>
    <property type="match status" value="1"/>
</dbReference>
<dbReference type="PANTHER" id="PTHR13937:SF0">
    <property type="entry name" value="EUKARYOTIC TRANSLATION INITIATION FACTOR 3 SUBUNIT C-RELATED"/>
    <property type="match status" value="1"/>
</dbReference>
<dbReference type="Pfam" id="PF05470">
    <property type="entry name" value="eIF-3c_N"/>
    <property type="match status" value="1"/>
</dbReference>
<dbReference type="Pfam" id="PF01399">
    <property type="entry name" value="PCI"/>
    <property type="match status" value="1"/>
</dbReference>
<dbReference type="SMART" id="SM00088">
    <property type="entry name" value="PINT"/>
    <property type="match status" value="1"/>
</dbReference>
<dbReference type="SUPFAM" id="SSF46785">
    <property type="entry name" value="Winged helix' DNA-binding domain"/>
    <property type="match status" value="1"/>
</dbReference>
<dbReference type="PROSITE" id="PS50250">
    <property type="entry name" value="PCI"/>
    <property type="match status" value="1"/>
</dbReference>
<protein>
    <recommendedName>
        <fullName evidence="1">Eukaryotic translation initiation factor 3 subunit C</fullName>
        <shortName evidence="1">eIF3c</shortName>
    </recommendedName>
    <alternativeName>
        <fullName evidence="1">Eukaryotic translation initiation factor 3 subunit 8</fullName>
    </alternativeName>
</protein>
<organism>
    <name type="scientific">Drosophila willistoni</name>
    <name type="common">Fruit fly</name>
    <dbReference type="NCBI Taxonomy" id="7260"/>
    <lineage>
        <taxon>Eukaryota</taxon>
        <taxon>Metazoa</taxon>
        <taxon>Ecdysozoa</taxon>
        <taxon>Arthropoda</taxon>
        <taxon>Hexapoda</taxon>
        <taxon>Insecta</taxon>
        <taxon>Pterygota</taxon>
        <taxon>Neoptera</taxon>
        <taxon>Endopterygota</taxon>
        <taxon>Diptera</taxon>
        <taxon>Brachycera</taxon>
        <taxon>Muscomorpha</taxon>
        <taxon>Ephydroidea</taxon>
        <taxon>Drosophilidae</taxon>
        <taxon>Drosophila</taxon>
        <taxon>Sophophora</taxon>
    </lineage>
</organism>
<keyword id="KW-0963">Cytoplasm</keyword>
<keyword id="KW-0396">Initiation factor</keyword>
<keyword id="KW-0597">Phosphoprotein</keyword>
<keyword id="KW-0648">Protein biosynthesis</keyword>
<keyword id="KW-1185">Reference proteome</keyword>
<name>EIF3C_DROWI</name>
<comment type="function">
    <text evidence="1">Component of the eukaryotic translation initiation factor 3 (eIF-3) complex, which is involved in protein synthesis of a specialized repertoire of mRNAs and, together with other initiation factors, stimulates binding of mRNA and methionyl-tRNAi to the 40S ribosome. The eIF-3 complex specifically targets and initiates translation of a subset of mRNAs involved in cell proliferation.</text>
</comment>
<comment type="subunit">
    <text evidence="1">Component of the eukaryotic translation initiation factor 3 (eIF-3) complex. The eIF-3 complex interacts with pix.</text>
</comment>
<comment type="subcellular location">
    <subcellularLocation>
        <location evidence="1">Cytoplasm</location>
    </subcellularLocation>
</comment>
<comment type="similarity">
    <text evidence="1">Belongs to the eIF-3 subunit C family.</text>
</comment>